<gene>
    <name type="primary">LDHA</name>
</gene>
<proteinExistence type="evidence at transcript level"/>
<name>LDHA_CAICA</name>
<accession>Q98SL2</accession>
<keyword id="KW-0963">Cytoplasm</keyword>
<keyword id="KW-0520">NAD</keyword>
<keyword id="KW-0560">Oxidoreductase</keyword>
<sequence>MSVKEHLIHNVHKEEHGHAHNKITVVGVGAVGMACAISILMKDLADELALVDVVEDKLRGEMLDLQHGSLFLRTPKIVSGKDYSVTANSKLVIITAGARQQEGESRLNLVQRNVNIFKFIIPNVVKHSPDCKLLVVSNPVDILTYVAWKISGFPKHRVIGSGCNLDSARFRYLMGERLGIHPLSCHGWIVGEHGDSSVPVWSGVNVAGVSLKALHPELGTDADKEHWKEVHKEVVDSAYEVIKLKGYTSWAIGLSVADLAETVMKNLRRVHPISTMVKGMYGIKDDVFLSVPCVLGYHGITDVVMMTLKSEEEEKIRKSADTLWGIQKELQF</sequence>
<protein>
    <recommendedName>
        <fullName>L-lactate dehydrogenase A chain</fullName>
        <shortName>LDH-A</shortName>
        <ecNumber evidence="2">1.1.1.27</ecNumber>
    </recommendedName>
</protein>
<organism>
    <name type="scientific">Caiman crocodilus apaporiensis</name>
    <name type="common">Rio Apaporis caiman</name>
    <dbReference type="NCBI Taxonomy" id="157164"/>
    <lineage>
        <taxon>Eukaryota</taxon>
        <taxon>Metazoa</taxon>
        <taxon>Chordata</taxon>
        <taxon>Craniata</taxon>
        <taxon>Vertebrata</taxon>
        <taxon>Euteleostomi</taxon>
        <taxon>Archelosauria</taxon>
        <taxon>Archosauria</taxon>
        <taxon>Crocodylia</taxon>
        <taxon>Alligatoridae</taxon>
        <taxon>Caimaninae</taxon>
        <taxon>Caiman</taxon>
    </lineage>
</organism>
<evidence type="ECO:0000250" key="1"/>
<evidence type="ECO:0000250" key="2">
    <source>
        <dbReference type="UniProtKB" id="P00338"/>
    </source>
</evidence>
<evidence type="ECO:0000305" key="3"/>
<dbReference type="EC" id="1.1.1.27" evidence="2"/>
<dbReference type="EMBL" id="AF363792">
    <property type="protein sequence ID" value="AAK37570.1"/>
    <property type="molecule type" value="mRNA"/>
</dbReference>
<dbReference type="SMR" id="Q98SL2"/>
<dbReference type="UniPathway" id="UPA00554">
    <property type="reaction ID" value="UER00611"/>
</dbReference>
<dbReference type="GO" id="GO:0005737">
    <property type="term" value="C:cytoplasm"/>
    <property type="evidence" value="ECO:0007669"/>
    <property type="project" value="UniProtKB-SubCell"/>
</dbReference>
<dbReference type="GO" id="GO:0004459">
    <property type="term" value="F:L-lactate dehydrogenase activity"/>
    <property type="evidence" value="ECO:0007669"/>
    <property type="project" value="UniProtKB-EC"/>
</dbReference>
<dbReference type="GO" id="GO:0006089">
    <property type="term" value="P:lactate metabolic process"/>
    <property type="evidence" value="ECO:0007669"/>
    <property type="project" value="TreeGrafter"/>
</dbReference>
<dbReference type="CDD" id="cd05293">
    <property type="entry name" value="LDH_1"/>
    <property type="match status" value="1"/>
</dbReference>
<dbReference type="FunFam" id="3.40.50.720:FF:000029">
    <property type="entry name" value="L-lactate dehydrogenase A chain"/>
    <property type="match status" value="1"/>
</dbReference>
<dbReference type="FunFam" id="3.90.110.10:FF:000003">
    <property type="entry name" value="L-lactate dehydrogenase A chain"/>
    <property type="match status" value="1"/>
</dbReference>
<dbReference type="Gene3D" id="3.90.110.10">
    <property type="entry name" value="Lactate dehydrogenase/glycoside hydrolase, family 4, C-terminal"/>
    <property type="match status" value="1"/>
</dbReference>
<dbReference type="Gene3D" id="3.40.50.720">
    <property type="entry name" value="NAD(P)-binding Rossmann-like Domain"/>
    <property type="match status" value="1"/>
</dbReference>
<dbReference type="HAMAP" id="MF_00488">
    <property type="entry name" value="Lactate_dehydrog"/>
    <property type="match status" value="1"/>
</dbReference>
<dbReference type="InterPro" id="IPR001557">
    <property type="entry name" value="L-lactate/malate_DH"/>
</dbReference>
<dbReference type="InterPro" id="IPR011304">
    <property type="entry name" value="L-lactate_DH"/>
</dbReference>
<dbReference type="InterPro" id="IPR018177">
    <property type="entry name" value="L-lactate_DH_AS"/>
</dbReference>
<dbReference type="InterPro" id="IPR022383">
    <property type="entry name" value="Lactate/malate_DH_C"/>
</dbReference>
<dbReference type="InterPro" id="IPR001236">
    <property type="entry name" value="Lactate/malate_DH_N"/>
</dbReference>
<dbReference type="InterPro" id="IPR015955">
    <property type="entry name" value="Lactate_DH/Glyco_Ohase_4_C"/>
</dbReference>
<dbReference type="InterPro" id="IPR036291">
    <property type="entry name" value="NAD(P)-bd_dom_sf"/>
</dbReference>
<dbReference type="NCBIfam" id="TIGR01771">
    <property type="entry name" value="L-LDH-NAD"/>
    <property type="match status" value="1"/>
</dbReference>
<dbReference type="NCBIfam" id="NF000824">
    <property type="entry name" value="PRK00066.1"/>
    <property type="match status" value="1"/>
</dbReference>
<dbReference type="PANTHER" id="PTHR43128">
    <property type="entry name" value="L-2-HYDROXYCARBOXYLATE DEHYDROGENASE (NAD(P)(+))"/>
    <property type="match status" value="1"/>
</dbReference>
<dbReference type="PANTHER" id="PTHR43128:SF10">
    <property type="entry name" value="L-LACTATE DEHYDROGENASE A CHAIN"/>
    <property type="match status" value="1"/>
</dbReference>
<dbReference type="Pfam" id="PF02866">
    <property type="entry name" value="Ldh_1_C"/>
    <property type="match status" value="1"/>
</dbReference>
<dbReference type="Pfam" id="PF00056">
    <property type="entry name" value="Ldh_1_N"/>
    <property type="match status" value="1"/>
</dbReference>
<dbReference type="PIRSF" id="PIRSF000102">
    <property type="entry name" value="Lac_mal_DH"/>
    <property type="match status" value="1"/>
</dbReference>
<dbReference type="PRINTS" id="PR00086">
    <property type="entry name" value="LLDHDRGNASE"/>
</dbReference>
<dbReference type="SUPFAM" id="SSF56327">
    <property type="entry name" value="LDH C-terminal domain-like"/>
    <property type="match status" value="1"/>
</dbReference>
<dbReference type="SUPFAM" id="SSF51735">
    <property type="entry name" value="NAD(P)-binding Rossmann-fold domains"/>
    <property type="match status" value="1"/>
</dbReference>
<dbReference type="PROSITE" id="PS00064">
    <property type="entry name" value="L_LDH"/>
    <property type="match status" value="1"/>
</dbReference>
<comment type="function">
    <text evidence="2">Interconverts simultaneously and stereospecifically pyruvate and lactate with concomitant interconversion of NADH and NAD(+).</text>
</comment>
<comment type="catalytic activity">
    <reaction evidence="2">
        <text>(S)-lactate + NAD(+) = pyruvate + NADH + H(+)</text>
        <dbReference type="Rhea" id="RHEA:23444"/>
        <dbReference type="ChEBI" id="CHEBI:15361"/>
        <dbReference type="ChEBI" id="CHEBI:15378"/>
        <dbReference type="ChEBI" id="CHEBI:16651"/>
        <dbReference type="ChEBI" id="CHEBI:57540"/>
        <dbReference type="ChEBI" id="CHEBI:57945"/>
        <dbReference type="EC" id="1.1.1.27"/>
    </reaction>
    <physiologicalReaction direction="left-to-right" evidence="2">
        <dbReference type="Rhea" id="RHEA:23445"/>
    </physiologicalReaction>
    <physiologicalReaction direction="right-to-left" evidence="2">
        <dbReference type="Rhea" id="RHEA:23446"/>
    </physiologicalReaction>
</comment>
<comment type="pathway">
    <text evidence="2">Fermentation; pyruvate fermentation to lactate; (S)-lactate from pyruvate: step 1/1.</text>
</comment>
<comment type="subunit">
    <text evidence="1">Homotetramer.</text>
</comment>
<comment type="subcellular location">
    <subcellularLocation>
        <location evidence="1">Cytoplasm</location>
    </subcellularLocation>
</comment>
<comment type="similarity">
    <text evidence="3">Belongs to the LDH/MDH superfamily. LDH family.</text>
</comment>
<feature type="initiator methionine" description="Removed" evidence="1">
    <location>
        <position position="1"/>
    </location>
</feature>
<feature type="chain" id="PRO_0000168423" description="L-lactate dehydrogenase A chain">
    <location>
        <begin position="2"/>
        <end position="332"/>
    </location>
</feature>
<feature type="active site" description="Proton acceptor" evidence="1">
    <location>
        <position position="193"/>
    </location>
</feature>
<feature type="binding site" evidence="1">
    <location>
        <begin position="29"/>
        <end position="57"/>
    </location>
    <ligand>
        <name>NAD(+)</name>
        <dbReference type="ChEBI" id="CHEBI:57540"/>
    </ligand>
</feature>
<feature type="binding site" evidence="1">
    <location>
        <position position="99"/>
    </location>
    <ligand>
        <name>NAD(+)</name>
        <dbReference type="ChEBI" id="CHEBI:57540"/>
    </ligand>
</feature>
<feature type="binding site" evidence="1">
    <location>
        <position position="106"/>
    </location>
    <ligand>
        <name>substrate</name>
    </ligand>
</feature>
<feature type="binding site" evidence="1">
    <location>
        <position position="138"/>
    </location>
    <ligand>
        <name>NAD(+)</name>
        <dbReference type="ChEBI" id="CHEBI:57540"/>
    </ligand>
</feature>
<feature type="binding site" evidence="1">
    <location>
        <position position="138"/>
    </location>
    <ligand>
        <name>substrate</name>
    </ligand>
</feature>
<feature type="binding site" evidence="1">
    <location>
        <position position="169"/>
    </location>
    <ligand>
        <name>substrate</name>
    </ligand>
</feature>
<feature type="binding site" evidence="1">
    <location>
        <position position="248"/>
    </location>
    <ligand>
        <name>substrate</name>
    </ligand>
</feature>
<reference key="1">
    <citation type="journal article" date="2001" name="Gene">
        <title>Lactate dehydrogenase genes of caiman and Chinese soft-shelled turtle, with emphasis on the molecular phylogenetics and evolution of reptiles.</title>
        <authorList>
            <person name="Liao C.-H."/>
            <person name="Ho W.-Z."/>
            <person name="Huang H.-W."/>
            <person name="Kuo C.-H."/>
            <person name="Lee S.-C."/>
            <person name="Li S.S.-L."/>
        </authorList>
    </citation>
    <scope>NUCLEOTIDE SEQUENCE [MRNA]</scope>
    <source>
        <tissue>Muscle</tissue>
    </source>
</reference>